<reference key="1">
    <citation type="journal article" date="2002" name="Nature">
        <title>The genome sequence of Schizosaccharomyces pombe.</title>
        <authorList>
            <person name="Wood V."/>
            <person name="Gwilliam R."/>
            <person name="Rajandream M.A."/>
            <person name="Lyne M.H."/>
            <person name="Lyne R."/>
            <person name="Stewart A."/>
            <person name="Sgouros J.G."/>
            <person name="Peat N."/>
            <person name="Hayles J."/>
            <person name="Baker S.G."/>
            <person name="Basham D."/>
            <person name="Bowman S."/>
            <person name="Brooks K."/>
            <person name="Brown D."/>
            <person name="Brown S."/>
            <person name="Chillingworth T."/>
            <person name="Churcher C.M."/>
            <person name="Collins M."/>
            <person name="Connor R."/>
            <person name="Cronin A."/>
            <person name="Davis P."/>
            <person name="Feltwell T."/>
            <person name="Fraser A."/>
            <person name="Gentles S."/>
            <person name="Goble A."/>
            <person name="Hamlin N."/>
            <person name="Harris D.E."/>
            <person name="Hidalgo J."/>
            <person name="Hodgson G."/>
            <person name="Holroyd S."/>
            <person name="Hornsby T."/>
            <person name="Howarth S."/>
            <person name="Huckle E.J."/>
            <person name="Hunt S."/>
            <person name="Jagels K."/>
            <person name="James K.D."/>
            <person name="Jones L."/>
            <person name="Jones M."/>
            <person name="Leather S."/>
            <person name="McDonald S."/>
            <person name="McLean J."/>
            <person name="Mooney P."/>
            <person name="Moule S."/>
            <person name="Mungall K.L."/>
            <person name="Murphy L.D."/>
            <person name="Niblett D."/>
            <person name="Odell C."/>
            <person name="Oliver K."/>
            <person name="O'Neil S."/>
            <person name="Pearson D."/>
            <person name="Quail M.A."/>
            <person name="Rabbinowitsch E."/>
            <person name="Rutherford K.M."/>
            <person name="Rutter S."/>
            <person name="Saunders D."/>
            <person name="Seeger K."/>
            <person name="Sharp S."/>
            <person name="Skelton J."/>
            <person name="Simmonds M.N."/>
            <person name="Squares R."/>
            <person name="Squares S."/>
            <person name="Stevens K."/>
            <person name="Taylor K."/>
            <person name="Taylor R.G."/>
            <person name="Tivey A."/>
            <person name="Walsh S.V."/>
            <person name="Warren T."/>
            <person name="Whitehead S."/>
            <person name="Woodward J.R."/>
            <person name="Volckaert G."/>
            <person name="Aert R."/>
            <person name="Robben J."/>
            <person name="Grymonprez B."/>
            <person name="Weltjens I."/>
            <person name="Vanstreels E."/>
            <person name="Rieger M."/>
            <person name="Schaefer M."/>
            <person name="Mueller-Auer S."/>
            <person name="Gabel C."/>
            <person name="Fuchs M."/>
            <person name="Duesterhoeft A."/>
            <person name="Fritzc C."/>
            <person name="Holzer E."/>
            <person name="Moestl D."/>
            <person name="Hilbert H."/>
            <person name="Borzym K."/>
            <person name="Langer I."/>
            <person name="Beck A."/>
            <person name="Lehrach H."/>
            <person name="Reinhardt R."/>
            <person name="Pohl T.M."/>
            <person name="Eger P."/>
            <person name="Zimmermann W."/>
            <person name="Wedler H."/>
            <person name="Wambutt R."/>
            <person name="Purnelle B."/>
            <person name="Goffeau A."/>
            <person name="Cadieu E."/>
            <person name="Dreano S."/>
            <person name="Gloux S."/>
            <person name="Lelaure V."/>
            <person name="Mottier S."/>
            <person name="Galibert F."/>
            <person name="Aves S.J."/>
            <person name="Xiang Z."/>
            <person name="Hunt C."/>
            <person name="Moore K."/>
            <person name="Hurst S.M."/>
            <person name="Lucas M."/>
            <person name="Rochet M."/>
            <person name="Gaillardin C."/>
            <person name="Tallada V.A."/>
            <person name="Garzon A."/>
            <person name="Thode G."/>
            <person name="Daga R.R."/>
            <person name="Cruzado L."/>
            <person name="Jimenez J."/>
            <person name="Sanchez M."/>
            <person name="del Rey F."/>
            <person name="Benito J."/>
            <person name="Dominguez A."/>
            <person name="Revuelta J.L."/>
            <person name="Moreno S."/>
            <person name="Armstrong J."/>
            <person name="Forsburg S.L."/>
            <person name="Cerutti L."/>
            <person name="Lowe T."/>
            <person name="McCombie W.R."/>
            <person name="Paulsen I."/>
            <person name="Potashkin J."/>
            <person name="Shpakovski G.V."/>
            <person name="Ussery D."/>
            <person name="Barrell B.G."/>
            <person name="Nurse P."/>
        </authorList>
    </citation>
    <scope>NUCLEOTIDE SEQUENCE [LARGE SCALE GENOMIC DNA]</scope>
    <source>
        <strain>972 / ATCC 24843</strain>
    </source>
</reference>
<reference key="2">
    <citation type="journal article" date="2000" name="Genes Cells">
        <title>Large-scale screening of intracellular protein localization in living fission yeast cells by the use of a GFP-fusion genomic DNA library.</title>
        <authorList>
            <person name="Ding D.-Q."/>
            <person name="Tomita Y."/>
            <person name="Yamamoto A."/>
            <person name="Chikashige Y."/>
            <person name="Haraguchi T."/>
            <person name="Hiraoka Y."/>
        </authorList>
    </citation>
    <scope>NUCLEOTIDE SEQUENCE [LARGE SCALE GENOMIC DNA] OF 78-226</scope>
    <scope>SUBCELLULAR LOCATION</scope>
    <source>
        <strain>ATCC 38364 / 968</strain>
    </source>
</reference>
<reference key="3">
    <citation type="journal article" date="2006" name="Nat. Biotechnol.">
        <title>ORFeome cloning and global analysis of protein localization in the fission yeast Schizosaccharomyces pombe.</title>
        <authorList>
            <person name="Matsuyama A."/>
            <person name="Arai R."/>
            <person name="Yashiroda Y."/>
            <person name="Shirai A."/>
            <person name="Kamata A."/>
            <person name="Sekido S."/>
            <person name="Kobayashi Y."/>
            <person name="Hashimoto A."/>
            <person name="Hamamoto M."/>
            <person name="Hiraoka Y."/>
            <person name="Horinouchi S."/>
            <person name="Yoshida M."/>
        </authorList>
    </citation>
    <scope>SUBCELLULAR LOCATION [LARGE SCALE ANALYSIS]</scope>
</reference>
<organism>
    <name type="scientific">Schizosaccharomyces pombe (strain 972 / ATCC 24843)</name>
    <name type="common">Fission yeast</name>
    <dbReference type="NCBI Taxonomy" id="284812"/>
    <lineage>
        <taxon>Eukaryota</taxon>
        <taxon>Fungi</taxon>
        <taxon>Dikarya</taxon>
        <taxon>Ascomycota</taxon>
        <taxon>Taphrinomycotina</taxon>
        <taxon>Schizosaccharomycetes</taxon>
        <taxon>Schizosaccharomycetales</taxon>
        <taxon>Schizosaccharomycetaceae</taxon>
        <taxon>Schizosaccharomyces</taxon>
    </lineage>
</organism>
<proteinExistence type="inferred from homology"/>
<accession>Q9P6R5</accession>
<accession>Q9UTY8</accession>
<gene>
    <name type="primary">gpi14</name>
    <name type="ORF">SPBC13E7.05</name>
</gene>
<name>GPI14_SCHPO</name>
<comment type="function">
    <text evidence="1">Mannosyltransferase involved in glycosylphosphatidylinositol-anchor biosynthesis. Transfers the first alpha-1,4-mannose to GlcN-acyl-PI during GPI precursor assembly. Required for cell wall integrity (By similarity).</text>
</comment>
<comment type="pathway">
    <text>Glycolipid biosynthesis; glycosylphosphatidylinositol-anchor biosynthesis.</text>
</comment>
<comment type="subcellular location">
    <subcellularLocation>
        <location evidence="3 4">Endoplasmic reticulum membrane</location>
        <topology evidence="3 4">Multi-pass membrane protein</topology>
    </subcellularLocation>
</comment>
<comment type="similarity">
    <text evidence="5">Belongs to the PIGM family.</text>
</comment>
<comment type="sequence caution" evidence="5">
    <conflict type="erroneous initiation">
        <sequence resource="EMBL-CDS" id="CAB89880"/>
    </conflict>
</comment>
<protein>
    <recommendedName>
        <fullName>GPI mannosyltransferase 1</fullName>
        <ecNumber>2.4.1.-</ecNumber>
    </recommendedName>
    <alternativeName>
        <fullName>GPI mannosyltransferase I</fullName>
        <shortName>GPI-MT-I</shortName>
    </alternativeName>
    <alternativeName>
        <fullName>Glycosylphosphatidylinositol-anchor biosynthesis protein 14</fullName>
    </alternativeName>
</protein>
<dbReference type="EC" id="2.4.1.-"/>
<dbReference type="EMBL" id="CU329671">
    <property type="protein sequence ID" value="CAB89880.1"/>
    <property type="status" value="ALT_INIT"/>
    <property type="molecule type" value="Genomic_DNA"/>
</dbReference>
<dbReference type="EMBL" id="AB027924">
    <property type="protein sequence ID" value="BAA87228.1"/>
    <property type="molecule type" value="Genomic_DNA"/>
</dbReference>
<dbReference type="RefSeq" id="NP_596260.1">
    <property type="nucleotide sequence ID" value="NM_001022180.2"/>
</dbReference>
<dbReference type="SMR" id="Q9P6R5"/>
<dbReference type="FunCoup" id="Q9P6R5">
    <property type="interactions" value="335"/>
</dbReference>
<dbReference type="STRING" id="284812.Q9P6R5"/>
<dbReference type="CAZy" id="GT50">
    <property type="family name" value="Glycosyltransferase Family 50"/>
</dbReference>
<dbReference type="PaxDb" id="4896-SPBC13E7.05.1"/>
<dbReference type="GeneID" id="2540126"/>
<dbReference type="KEGG" id="spo:2540126"/>
<dbReference type="PomBase" id="SPBC13E7.05">
    <property type="gene designation" value="gpi14"/>
</dbReference>
<dbReference type="eggNOG" id="KOG3893">
    <property type="taxonomic scope" value="Eukaryota"/>
</dbReference>
<dbReference type="InParanoid" id="Q9P6R5"/>
<dbReference type="PhylomeDB" id="Q9P6R5"/>
<dbReference type="UniPathway" id="UPA00196"/>
<dbReference type="PRO" id="PR:Q9P6R5"/>
<dbReference type="Proteomes" id="UP000002485">
    <property type="component" value="Chromosome II"/>
</dbReference>
<dbReference type="GO" id="GO:0005783">
    <property type="term" value="C:endoplasmic reticulum"/>
    <property type="evidence" value="ECO:0007005"/>
    <property type="project" value="PomBase"/>
</dbReference>
<dbReference type="GO" id="GO:0005789">
    <property type="term" value="C:endoplasmic reticulum membrane"/>
    <property type="evidence" value="ECO:0000305"/>
    <property type="project" value="PomBase"/>
</dbReference>
<dbReference type="GO" id="GO:1990529">
    <property type="term" value="C:glycosylphosphatidylinositol-mannosyltransferase I complex"/>
    <property type="evidence" value="ECO:0000318"/>
    <property type="project" value="GO_Central"/>
</dbReference>
<dbReference type="GO" id="GO:0180041">
    <property type="term" value="F:glycolipid 1,4-alpha-mannosyltransferase activity"/>
    <property type="evidence" value="ECO:0000305"/>
    <property type="project" value="PomBase"/>
</dbReference>
<dbReference type="GO" id="GO:0000030">
    <property type="term" value="F:mannosyltransferase activity"/>
    <property type="evidence" value="ECO:0000318"/>
    <property type="project" value="GO_Central"/>
</dbReference>
<dbReference type="GO" id="GO:0070402">
    <property type="term" value="F:NADPH binding"/>
    <property type="evidence" value="ECO:0000266"/>
    <property type="project" value="PomBase"/>
</dbReference>
<dbReference type="GO" id="GO:0071555">
    <property type="term" value="P:cell wall organization"/>
    <property type="evidence" value="ECO:0007669"/>
    <property type="project" value="UniProtKB-KW"/>
</dbReference>
<dbReference type="GO" id="GO:0006506">
    <property type="term" value="P:GPI anchor biosynthetic process"/>
    <property type="evidence" value="ECO:0000318"/>
    <property type="project" value="GO_Central"/>
</dbReference>
<dbReference type="InterPro" id="IPR007704">
    <property type="entry name" value="PIG-M"/>
</dbReference>
<dbReference type="PANTHER" id="PTHR12886:SF0">
    <property type="entry name" value="GPI MANNOSYLTRANSFERASE 1"/>
    <property type="match status" value="1"/>
</dbReference>
<dbReference type="PANTHER" id="PTHR12886">
    <property type="entry name" value="PIG-M MANNOSYLTRANSFERASE"/>
    <property type="match status" value="1"/>
</dbReference>
<dbReference type="Pfam" id="PF05007">
    <property type="entry name" value="Mannosyl_trans"/>
    <property type="match status" value="1"/>
</dbReference>
<keyword id="KW-0961">Cell wall biogenesis/degradation</keyword>
<keyword id="KW-0256">Endoplasmic reticulum</keyword>
<keyword id="KW-0328">Glycosyltransferase</keyword>
<keyword id="KW-0337">GPI-anchor biosynthesis</keyword>
<keyword id="KW-0472">Membrane</keyword>
<keyword id="KW-1185">Reference proteome</keyword>
<keyword id="KW-0808">Transferase</keyword>
<keyword id="KW-0812">Transmembrane</keyword>
<keyword id="KW-1133">Transmembrane helix</keyword>
<evidence type="ECO:0000250" key="1"/>
<evidence type="ECO:0000255" key="2"/>
<evidence type="ECO:0000269" key="3">
    <source>
    </source>
</evidence>
<evidence type="ECO:0000269" key="4">
    <source>
    </source>
</evidence>
<evidence type="ECO:0000305" key="5"/>
<feature type="chain" id="PRO_0000246233" description="GPI mannosyltransferase 1">
    <location>
        <begin position="1"/>
        <end position="371"/>
    </location>
</feature>
<feature type="transmembrane region" description="Helical" evidence="2">
    <location>
        <begin position="64"/>
        <end position="84"/>
    </location>
</feature>
<feature type="transmembrane region" description="Helical" evidence="2">
    <location>
        <begin position="120"/>
        <end position="140"/>
    </location>
</feature>
<feature type="transmembrane region" description="Helical" evidence="2">
    <location>
        <begin position="144"/>
        <end position="164"/>
    </location>
</feature>
<feature type="transmembrane region" description="Helical" evidence="2">
    <location>
        <begin position="190"/>
        <end position="210"/>
    </location>
</feature>
<feature type="transmembrane region" description="Helical" evidence="2">
    <location>
        <begin position="248"/>
        <end position="268"/>
    </location>
</feature>
<feature type="transmembrane region" description="Helical" evidence="2">
    <location>
        <begin position="290"/>
        <end position="310"/>
    </location>
</feature>
<feature type="transmembrane region" description="Helical" evidence="2">
    <location>
        <begin position="318"/>
        <end position="338"/>
    </location>
</feature>
<feature type="transmembrane region" description="Helical" evidence="2">
    <location>
        <begin position="344"/>
        <end position="364"/>
    </location>
</feature>
<feature type="sequence conflict" description="In Ref. 2; BAA87228." evidence="5" ref="2">
    <original>IAGWL</original>
    <variation>NCWVA</variation>
    <location>
        <begin position="78"/>
        <end position="82"/>
    </location>
</feature>
<sequence>MRLVLLNYGIWHDRRSALKFTDIDYFVFSDASKYVSIGMSPYMRDTYRYTPMLAILLLPTQYGFPSWGKYLFSISDLIAGWLMIKLLSRRISYKRSLIYSSFWILNPFVAIISTRGNCEAILGILSIALLYLIEKKSVWLASLILGFSVHFKIYPFMYGIAFLVYFSKPKKGSTFMEKFLSLLSINQLKIVVGSLFMFTICNLLMYYLYGSPFLEHTYLYHFGRTDHRHNFSLHHLNLYYESSFGAKASSLFAFLPQLSLCMLIPLVFGKKNLPGTLFAQTFAFVTFNKVCTSQYFMWYLVFLPLVLPNSKLLSKKGLICLSLWIIGQLLWLISAYNLEMLGKSVFIPLWLSGLLFFFFNVYELKIILDSL</sequence>